<accession>Q5LG64</accession>
<reference key="1">
    <citation type="journal article" date="2005" name="Science">
        <title>Extensive DNA inversions in the B. fragilis genome control variable gene expression.</title>
        <authorList>
            <person name="Cerdeno-Tarraga A.-M."/>
            <person name="Patrick S."/>
            <person name="Crossman L.C."/>
            <person name="Blakely G."/>
            <person name="Abratt V."/>
            <person name="Lennard N."/>
            <person name="Poxton I."/>
            <person name="Duerden B."/>
            <person name="Harris B."/>
            <person name="Quail M.A."/>
            <person name="Barron A."/>
            <person name="Clark L."/>
            <person name="Corton C."/>
            <person name="Doggett J."/>
            <person name="Holden M.T.G."/>
            <person name="Larke N."/>
            <person name="Line A."/>
            <person name="Lord A."/>
            <person name="Norbertczak H."/>
            <person name="Ormond D."/>
            <person name="Price C."/>
            <person name="Rabbinowitsch E."/>
            <person name="Woodward J."/>
            <person name="Barrell B.G."/>
            <person name="Parkhill J."/>
        </authorList>
    </citation>
    <scope>NUCLEOTIDE SEQUENCE [LARGE SCALE GENOMIC DNA]</scope>
    <source>
        <strain>ATCC 25285 / DSM 2151 / CCUG 4856 / JCM 11019 / LMG 10263 / NCTC 9343 / Onslow / VPI 2553 / EN-2</strain>
    </source>
</reference>
<protein>
    <recommendedName>
        <fullName evidence="1">Enolase</fullName>
        <ecNumber evidence="1">4.2.1.11</ecNumber>
    </recommendedName>
    <alternativeName>
        <fullName evidence="1">2-phospho-D-glycerate hydro-lyase</fullName>
    </alternativeName>
    <alternativeName>
        <fullName evidence="1">2-phosphoglycerate dehydratase</fullName>
    </alternativeName>
</protein>
<proteinExistence type="inferred from homology"/>
<sequence>MKIEKITGREILDSRGNPTVEVDVVLESGIMGRASVPSGASTGEHEALELRDGDKHRYGGKGVQKAVENVNKVIAPHLIGMSALDQIGIDHAMLALDGTKTKAKLGANAILGVSLAVAKAAANYLDIPLYRYIGGTNTYVLPVPMMNIINGGSHSDAPIAFQEFMIRPVGASSFKEGLRMGAEVFHALKKVLKDRGLSTAVGDEGGFAPNLEGTEDALNSILAAIKAAGYEPGKDVMIGMDCASSEFYHDGIYDYTKFEGEKGKKRTADEQIDYLEKLINEYPIDSIEDGMSENDWEGWKKLTQRIGDRCQLVGDDLFVTNVDFLAKGIEKGCANSILIKVNQIGSLTETLNAIEMAHRHGYTTVTSHRSGETEDATIADIAVATNSGQIKTGSLSRSDRMAKYNQLLRIEEELGDRAVYGYKRIVVKG</sequence>
<comment type="function">
    <text evidence="1">Catalyzes the reversible conversion of 2-phosphoglycerate (2-PG) into phosphoenolpyruvate (PEP). It is essential for the degradation of carbohydrates via glycolysis.</text>
</comment>
<comment type="catalytic activity">
    <reaction evidence="1">
        <text>(2R)-2-phosphoglycerate = phosphoenolpyruvate + H2O</text>
        <dbReference type="Rhea" id="RHEA:10164"/>
        <dbReference type="ChEBI" id="CHEBI:15377"/>
        <dbReference type="ChEBI" id="CHEBI:58289"/>
        <dbReference type="ChEBI" id="CHEBI:58702"/>
        <dbReference type="EC" id="4.2.1.11"/>
    </reaction>
</comment>
<comment type="cofactor">
    <cofactor evidence="1">
        <name>Mg(2+)</name>
        <dbReference type="ChEBI" id="CHEBI:18420"/>
    </cofactor>
    <text evidence="1">Binds a second Mg(2+) ion via substrate during catalysis.</text>
</comment>
<comment type="pathway">
    <text evidence="1">Carbohydrate degradation; glycolysis; pyruvate from D-glyceraldehyde 3-phosphate: step 4/5.</text>
</comment>
<comment type="subcellular location">
    <subcellularLocation>
        <location evidence="1">Cytoplasm</location>
    </subcellularLocation>
    <subcellularLocation>
        <location evidence="1">Secreted</location>
    </subcellularLocation>
    <subcellularLocation>
        <location evidence="1">Cell surface</location>
    </subcellularLocation>
    <text evidence="1">Fractions of enolase are present in both the cytoplasm and on the cell surface.</text>
</comment>
<comment type="similarity">
    <text evidence="1">Belongs to the enolase family.</text>
</comment>
<keyword id="KW-0963">Cytoplasm</keyword>
<keyword id="KW-0324">Glycolysis</keyword>
<keyword id="KW-0456">Lyase</keyword>
<keyword id="KW-0460">Magnesium</keyword>
<keyword id="KW-0479">Metal-binding</keyword>
<keyword id="KW-0964">Secreted</keyword>
<name>ENO_BACFN</name>
<dbReference type="EC" id="4.2.1.11" evidence="1"/>
<dbReference type="EMBL" id="CR626927">
    <property type="protein sequence ID" value="CAH06877.1"/>
    <property type="molecule type" value="Genomic_DNA"/>
</dbReference>
<dbReference type="RefSeq" id="WP_005785741.1">
    <property type="nucleotide sequence ID" value="NZ_UFTH01000001.1"/>
</dbReference>
<dbReference type="SMR" id="Q5LG64"/>
<dbReference type="PaxDb" id="272559-BF9343_1096"/>
<dbReference type="GeneID" id="60366948"/>
<dbReference type="KEGG" id="bfs:BF9343_1096"/>
<dbReference type="eggNOG" id="COG0148">
    <property type="taxonomic scope" value="Bacteria"/>
</dbReference>
<dbReference type="HOGENOM" id="CLU_031223_2_1_10"/>
<dbReference type="UniPathway" id="UPA00109">
    <property type="reaction ID" value="UER00187"/>
</dbReference>
<dbReference type="Proteomes" id="UP000006731">
    <property type="component" value="Chromosome"/>
</dbReference>
<dbReference type="GO" id="GO:0009986">
    <property type="term" value="C:cell surface"/>
    <property type="evidence" value="ECO:0007669"/>
    <property type="project" value="UniProtKB-SubCell"/>
</dbReference>
<dbReference type="GO" id="GO:0005576">
    <property type="term" value="C:extracellular region"/>
    <property type="evidence" value="ECO:0007669"/>
    <property type="project" value="UniProtKB-SubCell"/>
</dbReference>
<dbReference type="GO" id="GO:0000015">
    <property type="term" value="C:phosphopyruvate hydratase complex"/>
    <property type="evidence" value="ECO:0007669"/>
    <property type="project" value="InterPro"/>
</dbReference>
<dbReference type="GO" id="GO:0000287">
    <property type="term" value="F:magnesium ion binding"/>
    <property type="evidence" value="ECO:0007669"/>
    <property type="project" value="UniProtKB-UniRule"/>
</dbReference>
<dbReference type="GO" id="GO:0004634">
    <property type="term" value="F:phosphopyruvate hydratase activity"/>
    <property type="evidence" value="ECO:0007669"/>
    <property type="project" value="UniProtKB-UniRule"/>
</dbReference>
<dbReference type="GO" id="GO:0006096">
    <property type="term" value="P:glycolytic process"/>
    <property type="evidence" value="ECO:0007669"/>
    <property type="project" value="UniProtKB-UniRule"/>
</dbReference>
<dbReference type="CDD" id="cd03313">
    <property type="entry name" value="enolase"/>
    <property type="match status" value="1"/>
</dbReference>
<dbReference type="FunFam" id="3.20.20.120:FF:000001">
    <property type="entry name" value="Enolase"/>
    <property type="match status" value="1"/>
</dbReference>
<dbReference type="FunFam" id="3.30.390.10:FF:000001">
    <property type="entry name" value="Enolase"/>
    <property type="match status" value="1"/>
</dbReference>
<dbReference type="Gene3D" id="3.20.20.120">
    <property type="entry name" value="Enolase-like C-terminal domain"/>
    <property type="match status" value="1"/>
</dbReference>
<dbReference type="Gene3D" id="3.30.390.10">
    <property type="entry name" value="Enolase-like, N-terminal domain"/>
    <property type="match status" value="1"/>
</dbReference>
<dbReference type="HAMAP" id="MF_00318">
    <property type="entry name" value="Enolase"/>
    <property type="match status" value="1"/>
</dbReference>
<dbReference type="InterPro" id="IPR000941">
    <property type="entry name" value="Enolase"/>
</dbReference>
<dbReference type="InterPro" id="IPR036849">
    <property type="entry name" value="Enolase-like_C_sf"/>
</dbReference>
<dbReference type="InterPro" id="IPR029017">
    <property type="entry name" value="Enolase-like_N"/>
</dbReference>
<dbReference type="InterPro" id="IPR020810">
    <property type="entry name" value="Enolase_C"/>
</dbReference>
<dbReference type="InterPro" id="IPR020809">
    <property type="entry name" value="Enolase_CS"/>
</dbReference>
<dbReference type="InterPro" id="IPR020811">
    <property type="entry name" value="Enolase_N"/>
</dbReference>
<dbReference type="NCBIfam" id="TIGR01060">
    <property type="entry name" value="eno"/>
    <property type="match status" value="1"/>
</dbReference>
<dbReference type="PANTHER" id="PTHR11902">
    <property type="entry name" value="ENOLASE"/>
    <property type="match status" value="1"/>
</dbReference>
<dbReference type="PANTHER" id="PTHR11902:SF1">
    <property type="entry name" value="ENOLASE"/>
    <property type="match status" value="1"/>
</dbReference>
<dbReference type="Pfam" id="PF00113">
    <property type="entry name" value="Enolase_C"/>
    <property type="match status" value="1"/>
</dbReference>
<dbReference type="Pfam" id="PF03952">
    <property type="entry name" value="Enolase_N"/>
    <property type="match status" value="1"/>
</dbReference>
<dbReference type="PIRSF" id="PIRSF001400">
    <property type="entry name" value="Enolase"/>
    <property type="match status" value="1"/>
</dbReference>
<dbReference type="PRINTS" id="PR00148">
    <property type="entry name" value="ENOLASE"/>
</dbReference>
<dbReference type="SFLD" id="SFLDF00002">
    <property type="entry name" value="enolase"/>
    <property type="match status" value="1"/>
</dbReference>
<dbReference type="SFLD" id="SFLDG00178">
    <property type="entry name" value="enolase"/>
    <property type="match status" value="1"/>
</dbReference>
<dbReference type="SMART" id="SM01192">
    <property type="entry name" value="Enolase_C"/>
    <property type="match status" value="1"/>
</dbReference>
<dbReference type="SMART" id="SM01193">
    <property type="entry name" value="Enolase_N"/>
    <property type="match status" value="1"/>
</dbReference>
<dbReference type="SUPFAM" id="SSF51604">
    <property type="entry name" value="Enolase C-terminal domain-like"/>
    <property type="match status" value="1"/>
</dbReference>
<dbReference type="SUPFAM" id="SSF54826">
    <property type="entry name" value="Enolase N-terminal domain-like"/>
    <property type="match status" value="1"/>
</dbReference>
<dbReference type="PROSITE" id="PS00164">
    <property type="entry name" value="ENOLASE"/>
    <property type="match status" value="1"/>
</dbReference>
<feature type="chain" id="PRO_0000267000" description="Enolase">
    <location>
        <begin position="1"/>
        <end position="429"/>
    </location>
</feature>
<feature type="active site" description="Proton donor" evidence="1">
    <location>
        <position position="204"/>
    </location>
</feature>
<feature type="active site" description="Proton acceptor" evidence="1">
    <location>
        <position position="340"/>
    </location>
</feature>
<feature type="binding site" evidence="1">
    <location>
        <position position="162"/>
    </location>
    <ligand>
        <name>(2R)-2-phosphoglycerate</name>
        <dbReference type="ChEBI" id="CHEBI:58289"/>
    </ligand>
</feature>
<feature type="binding site" evidence="1">
    <location>
        <position position="241"/>
    </location>
    <ligand>
        <name>Mg(2+)</name>
        <dbReference type="ChEBI" id="CHEBI:18420"/>
    </ligand>
</feature>
<feature type="binding site" evidence="1">
    <location>
        <position position="288"/>
    </location>
    <ligand>
        <name>Mg(2+)</name>
        <dbReference type="ChEBI" id="CHEBI:18420"/>
    </ligand>
</feature>
<feature type="binding site" evidence="1">
    <location>
        <position position="315"/>
    </location>
    <ligand>
        <name>Mg(2+)</name>
        <dbReference type="ChEBI" id="CHEBI:18420"/>
    </ligand>
</feature>
<feature type="binding site" evidence="1">
    <location>
        <position position="340"/>
    </location>
    <ligand>
        <name>(2R)-2-phosphoglycerate</name>
        <dbReference type="ChEBI" id="CHEBI:58289"/>
    </ligand>
</feature>
<feature type="binding site" evidence="1">
    <location>
        <position position="369"/>
    </location>
    <ligand>
        <name>(2R)-2-phosphoglycerate</name>
        <dbReference type="ChEBI" id="CHEBI:58289"/>
    </ligand>
</feature>
<feature type="binding site" evidence="1">
    <location>
        <position position="370"/>
    </location>
    <ligand>
        <name>(2R)-2-phosphoglycerate</name>
        <dbReference type="ChEBI" id="CHEBI:58289"/>
    </ligand>
</feature>
<feature type="binding site" evidence="1">
    <location>
        <position position="391"/>
    </location>
    <ligand>
        <name>(2R)-2-phosphoglycerate</name>
        <dbReference type="ChEBI" id="CHEBI:58289"/>
    </ligand>
</feature>
<gene>
    <name evidence="1" type="primary">eno</name>
    <name type="ordered locus">BF1155</name>
</gene>
<organism>
    <name type="scientific">Bacteroides fragilis (strain ATCC 25285 / DSM 2151 / CCUG 4856 / JCM 11019 / LMG 10263 / NCTC 9343 / Onslow / VPI 2553 / EN-2)</name>
    <dbReference type="NCBI Taxonomy" id="272559"/>
    <lineage>
        <taxon>Bacteria</taxon>
        <taxon>Pseudomonadati</taxon>
        <taxon>Bacteroidota</taxon>
        <taxon>Bacteroidia</taxon>
        <taxon>Bacteroidales</taxon>
        <taxon>Bacteroidaceae</taxon>
        <taxon>Bacteroides</taxon>
    </lineage>
</organism>
<evidence type="ECO:0000255" key="1">
    <source>
        <dbReference type="HAMAP-Rule" id="MF_00318"/>
    </source>
</evidence>